<feature type="chain" id="PRO_0000220363" description="Alkylmercury lyase">
    <location>
        <begin position="1"/>
        <end position="215"/>
    </location>
</feature>
<dbReference type="EC" id="4.99.1.2"/>
<dbReference type="EMBL" id="X65467">
    <property type="protein sequence ID" value="CAA46461.1"/>
    <property type="molecule type" value="Genomic_DNA"/>
</dbReference>
<dbReference type="PIR" id="S30169">
    <property type="entry name" value="S30169"/>
</dbReference>
<dbReference type="SMR" id="P30342"/>
<dbReference type="GO" id="GO:0018836">
    <property type="term" value="F:alkylmercury lyase activity"/>
    <property type="evidence" value="ECO:0007669"/>
    <property type="project" value="UniProtKB-UniRule"/>
</dbReference>
<dbReference type="GO" id="GO:0046689">
    <property type="term" value="P:response to mercury ion"/>
    <property type="evidence" value="ECO:0007669"/>
    <property type="project" value="UniProtKB-UniRule"/>
</dbReference>
<dbReference type="Gene3D" id="3.30.450.410">
    <property type="match status" value="1"/>
</dbReference>
<dbReference type="HAMAP" id="MF_00714">
    <property type="entry name" value="MerB"/>
    <property type="match status" value="1"/>
</dbReference>
<dbReference type="InterPro" id="IPR004927">
    <property type="entry name" value="MerB"/>
</dbReference>
<dbReference type="InterPro" id="IPR024259">
    <property type="entry name" value="MerB_HTH_dom"/>
</dbReference>
<dbReference type="InterPro" id="IPR053717">
    <property type="entry name" value="MerB_lyase_sf"/>
</dbReference>
<dbReference type="InterPro" id="IPR036390">
    <property type="entry name" value="WH_DNA-bd_sf"/>
</dbReference>
<dbReference type="NCBIfam" id="NF033555">
    <property type="entry name" value="lyase_MerB"/>
    <property type="match status" value="1"/>
</dbReference>
<dbReference type="NCBIfam" id="NF009710">
    <property type="entry name" value="PRK13239.1"/>
    <property type="match status" value="1"/>
</dbReference>
<dbReference type="Pfam" id="PF12324">
    <property type="entry name" value="HTH_15"/>
    <property type="match status" value="1"/>
</dbReference>
<dbReference type="Pfam" id="PF03243">
    <property type="entry name" value="MerB"/>
    <property type="match status" value="1"/>
</dbReference>
<dbReference type="PIRSF" id="PIRSF001458">
    <property type="entry name" value="MerB"/>
    <property type="match status" value="1"/>
</dbReference>
<dbReference type="PRINTS" id="PR01699">
    <property type="entry name" value="ORGNOHGLYASE"/>
</dbReference>
<dbReference type="SUPFAM" id="SSF160387">
    <property type="entry name" value="NosL/MerB-like"/>
    <property type="match status" value="1"/>
</dbReference>
<dbReference type="SUPFAM" id="SSF46785">
    <property type="entry name" value="Winged helix' DNA-binding domain"/>
    <property type="match status" value="1"/>
</dbReference>
<keyword id="KW-0456">Lyase</keyword>
<keyword id="KW-0475">Mercuric resistance</keyword>
<keyword id="KW-0476">Mercury</keyword>
<gene>
    <name type="primary">merB</name>
</gene>
<reference key="1">
    <citation type="journal article" date="1992" name="Mol. Gen. Genet.">
        <title>Cloning and DNA sequence analysis of the mercury resistance genes of Streptomyces lividans.</title>
        <authorList>
            <person name="Sedlmeier R."/>
            <person name="Altenbuchner J."/>
        </authorList>
    </citation>
    <scope>NUCLEOTIDE SEQUENCE [GENOMIC DNA]</scope>
    <source>
        <strain>66 / 1326</strain>
    </source>
</reference>
<organism>
    <name type="scientific">Streptomyces lividans</name>
    <dbReference type="NCBI Taxonomy" id="1916"/>
    <lineage>
        <taxon>Bacteria</taxon>
        <taxon>Bacillati</taxon>
        <taxon>Actinomycetota</taxon>
        <taxon>Actinomycetes</taxon>
        <taxon>Kitasatosporales</taxon>
        <taxon>Streptomycetaceae</taxon>
        <taxon>Streptomyces</taxon>
    </lineage>
</organism>
<name>MERB_STRLI</name>
<sequence length="215" mass="23026">MDSQAQQLATRLTTAFNGGGAASSRPWLWRPLLQLLAQGRPVTVEQIAQATDRTPDQVREALAANPDTEYDERGRITGSGLTQNPTPHHFEVDGQQLYTWCALDTLIFPAILGRPAHVTSPCHATGTPVRLTVEPDQVTSVEPATAVVSIVTPDAPASIRTAFCNQVHFFATPDAGKGWLEEHPVATVLPVADAYQLGRPLTEALLTGDTPPGCC</sequence>
<proteinExistence type="inferred from homology"/>
<accession>P30342</accession>
<comment type="function">
    <text>Cleaves the carbon-mercury bond of organomercurials such as phenylmercuric acetate. One product is Hg(2+), which is subsequently detoxified by the mercuric reductase.</text>
</comment>
<comment type="catalytic activity">
    <reaction>
        <text>an alkylmercury + H(+) = an alkane + Hg(2+)</text>
        <dbReference type="Rhea" id="RHEA:18777"/>
        <dbReference type="ChEBI" id="CHEBI:15378"/>
        <dbReference type="ChEBI" id="CHEBI:16793"/>
        <dbReference type="ChEBI" id="CHEBI:18310"/>
        <dbReference type="ChEBI" id="CHEBI:83725"/>
        <dbReference type="EC" id="4.99.1.2"/>
    </reaction>
</comment>
<comment type="similarity">
    <text evidence="1">Belongs to the MerB family.</text>
</comment>
<evidence type="ECO:0000305" key="1"/>
<protein>
    <recommendedName>
        <fullName>Alkylmercury lyase</fullName>
        <ecNumber>4.99.1.2</ecNumber>
    </recommendedName>
    <alternativeName>
        <fullName>Organomercurial lyase</fullName>
    </alternativeName>
</protein>